<sequence>MSQFDVTVFTDGSCLGNPGPGGWAAIMRCNGCEKELSGGFALTTNNRMEILAVLEALEALRDPCKVTLFTDSQYVRNAVEKKWLAGWQRNGWKTADKKPVKNRDLWERLVPLLAKHSVSFRWVRGHSGHPENERCDVLARAQASRRGLPEDPGFTA</sequence>
<gene>
    <name evidence="1" type="primary">rnhA</name>
    <name type="ordered locus">Dvul_2274</name>
</gene>
<reference key="1">
    <citation type="journal article" date="2009" name="Environ. Microbiol.">
        <title>Contribution of mobile genetic elements to Desulfovibrio vulgaris genome plasticity.</title>
        <authorList>
            <person name="Walker C.B."/>
            <person name="Stolyar S."/>
            <person name="Chivian D."/>
            <person name="Pinel N."/>
            <person name="Gabster J.A."/>
            <person name="Dehal P.S."/>
            <person name="He Z."/>
            <person name="Yang Z.K."/>
            <person name="Yen H.C."/>
            <person name="Zhou J."/>
            <person name="Wall J.D."/>
            <person name="Hazen T.C."/>
            <person name="Arkin A.P."/>
            <person name="Stahl D.A."/>
        </authorList>
    </citation>
    <scope>NUCLEOTIDE SEQUENCE [LARGE SCALE GENOMIC DNA]</scope>
    <source>
        <strain>DP4</strain>
    </source>
</reference>
<accession>A1VFS4</accession>
<evidence type="ECO:0000255" key="1">
    <source>
        <dbReference type="HAMAP-Rule" id="MF_00042"/>
    </source>
</evidence>
<evidence type="ECO:0000255" key="2">
    <source>
        <dbReference type="PROSITE-ProRule" id="PRU00408"/>
    </source>
</evidence>
<dbReference type="EC" id="3.1.26.4" evidence="1"/>
<dbReference type="EMBL" id="CP000527">
    <property type="protein sequence ID" value="ABM29290.1"/>
    <property type="molecule type" value="Genomic_DNA"/>
</dbReference>
<dbReference type="RefSeq" id="WP_010937992.1">
    <property type="nucleotide sequence ID" value="NC_008751.1"/>
</dbReference>
<dbReference type="SMR" id="A1VFS4"/>
<dbReference type="KEGG" id="dvl:Dvul_2274"/>
<dbReference type="HOGENOM" id="CLU_030894_6_2_7"/>
<dbReference type="Proteomes" id="UP000009173">
    <property type="component" value="Chromosome"/>
</dbReference>
<dbReference type="GO" id="GO:0005737">
    <property type="term" value="C:cytoplasm"/>
    <property type="evidence" value="ECO:0007669"/>
    <property type="project" value="UniProtKB-SubCell"/>
</dbReference>
<dbReference type="GO" id="GO:0000287">
    <property type="term" value="F:magnesium ion binding"/>
    <property type="evidence" value="ECO:0007669"/>
    <property type="project" value="UniProtKB-UniRule"/>
</dbReference>
<dbReference type="GO" id="GO:0003676">
    <property type="term" value="F:nucleic acid binding"/>
    <property type="evidence" value="ECO:0007669"/>
    <property type="project" value="InterPro"/>
</dbReference>
<dbReference type="GO" id="GO:0004523">
    <property type="term" value="F:RNA-DNA hybrid ribonuclease activity"/>
    <property type="evidence" value="ECO:0007669"/>
    <property type="project" value="UniProtKB-UniRule"/>
</dbReference>
<dbReference type="GO" id="GO:0043137">
    <property type="term" value="P:DNA replication, removal of RNA primer"/>
    <property type="evidence" value="ECO:0007669"/>
    <property type="project" value="TreeGrafter"/>
</dbReference>
<dbReference type="CDD" id="cd09278">
    <property type="entry name" value="RNase_HI_prokaryote_like"/>
    <property type="match status" value="1"/>
</dbReference>
<dbReference type="FunFam" id="3.30.420.10:FF:000089">
    <property type="entry name" value="Ribonuclease H"/>
    <property type="match status" value="1"/>
</dbReference>
<dbReference type="Gene3D" id="3.30.420.10">
    <property type="entry name" value="Ribonuclease H-like superfamily/Ribonuclease H"/>
    <property type="match status" value="1"/>
</dbReference>
<dbReference type="HAMAP" id="MF_00042">
    <property type="entry name" value="RNase_H"/>
    <property type="match status" value="1"/>
</dbReference>
<dbReference type="InterPro" id="IPR050092">
    <property type="entry name" value="RNase_H"/>
</dbReference>
<dbReference type="InterPro" id="IPR012337">
    <property type="entry name" value="RNaseH-like_sf"/>
</dbReference>
<dbReference type="InterPro" id="IPR002156">
    <property type="entry name" value="RNaseH_domain"/>
</dbReference>
<dbReference type="InterPro" id="IPR036397">
    <property type="entry name" value="RNaseH_sf"/>
</dbReference>
<dbReference type="InterPro" id="IPR022892">
    <property type="entry name" value="RNaseHI"/>
</dbReference>
<dbReference type="NCBIfam" id="NF001236">
    <property type="entry name" value="PRK00203.1"/>
    <property type="match status" value="1"/>
</dbReference>
<dbReference type="PANTHER" id="PTHR10642">
    <property type="entry name" value="RIBONUCLEASE H1"/>
    <property type="match status" value="1"/>
</dbReference>
<dbReference type="PANTHER" id="PTHR10642:SF26">
    <property type="entry name" value="RIBONUCLEASE H1"/>
    <property type="match status" value="1"/>
</dbReference>
<dbReference type="Pfam" id="PF00075">
    <property type="entry name" value="RNase_H"/>
    <property type="match status" value="1"/>
</dbReference>
<dbReference type="SUPFAM" id="SSF53098">
    <property type="entry name" value="Ribonuclease H-like"/>
    <property type="match status" value="1"/>
</dbReference>
<dbReference type="PROSITE" id="PS50879">
    <property type="entry name" value="RNASE_H_1"/>
    <property type="match status" value="1"/>
</dbReference>
<feature type="chain" id="PRO_0000332591" description="Ribonuclease H">
    <location>
        <begin position="1"/>
        <end position="156"/>
    </location>
</feature>
<feature type="domain" description="RNase H type-1" evidence="2">
    <location>
        <begin position="2"/>
        <end position="144"/>
    </location>
</feature>
<feature type="binding site" evidence="1">
    <location>
        <position position="11"/>
    </location>
    <ligand>
        <name>Mg(2+)</name>
        <dbReference type="ChEBI" id="CHEBI:18420"/>
        <label>1</label>
    </ligand>
</feature>
<feature type="binding site" evidence="1">
    <location>
        <position position="11"/>
    </location>
    <ligand>
        <name>Mg(2+)</name>
        <dbReference type="ChEBI" id="CHEBI:18420"/>
        <label>2</label>
    </ligand>
</feature>
<feature type="binding site" evidence="1">
    <location>
        <position position="49"/>
    </location>
    <ligand>
        <name>Mg(2+)</name>
        <dbReference type="ChEBI" id="CHEBI:18420"/>
        <label>1</label>
    </ligand>
</feature>
<feature type="binding site" evidence="1">
    <location>
        <position position="71"/>
    </location>
    <ligand>
        <name>Mg(2+)</name>
        <dbReference type="ChEBI" id="CHEBI:18420"/>
        <label>1</label>
    </ligand>
</feature>
<feature type="binding site" evidence="1">
    <location>
        <position position="136"/>
    </location>
    <ligand>
        <name>Mg(2+)</name>
        <dbReference type="ChEBI" id="CHEBI:18420"/>
        <label>2</label>
    </ligand>
</feature>
<keyword id="KW-0963">Cytoplasm</keyword>
<keyword id="KW-0255">Endonuclease</keyword>
<keyword id="KW-0378">Hydrolase</keyword>
<keyword id="KW-0460">Magnesium</keyword>
<keyword id="KW-0479">Metal-binding</keyword>
<keyword id="KW-0540">Nuclease</keyword>
<organism>
    <name type="scientific">Nitratidesulfovibrio vulgaris (strain DP4)</name>
    <name type="common">Desulfovibrio vulgaris</name>
    <dbReference type="NCBI Taxonomy" id="391774"/>
    <lineage>
        <taxon>Bacteria</taxon>
        <taxon>Pseudomonadati</taxon>
        <taxon>Thermodesulfobacteriota</taxon>
        <taxon>Desulfovibrionia</taxon>
        <taxon>Desulfovibrionales</taxon>
        <taxon>Desulfovibrionaceae</taxon>
        <taxon>Nitratidesulfovibrio</taxon>
    </lineage>
</organism>
<comment type="function">
    <text evidence="1">Endonuclease that specifically degrades the RNA of RNA-DNA hybrids.</text>
</comment>
<comment type="catalytic activity">
    <reaction evidence="1">
        <text>Endonucleolytic cleavage to 5'-phosphomonoester.</text>
        <dbReference type="EC" id="3.1.26.4"/>
    </reaction>
</comment>
<comment type="cofactor">
    <cofactor evidence="1">
        <name>Mg(2+)</name>
        <dbReference type="ChEBI" id="CHEBI:18420"/>
    </cofactor>
    <text evidence="1">Binds 1 Mg(2+) ion per subunit. May bind a second metal ion at a regulatory site, or after substrate binding.</text>
</comment>
<comment type="subunit">
    <text evidence="1">Monomer.</text>
</comment>
<comment type="subcellular location">
    <subcellularLocation>
        <location evidence="1">Cytoplasm</location>
    </subcellularLocation>
</comment>
<comment type="similarity">
    <text evidence="1">Belongs to the RNase H family.</text>
</comment>
<protein>
    <recommendedName>
        <fullName evidence="1">Ribonuclease H</fullName>
        <shortName evidence="1">RNase H</shortName>
        <ecNumber evidence="1">3.1.26.4</ecNumber>
    </recommendedName>
</protein>
<proteinExistence type="inferred from homology"/>
<name>RNH_NITV4</name>